<reference key="1">
    <citation type="journal article" date="2005" name="Plant Cell Rep.">
        <title>Molecular cloning and expression analysis of the cell-wall invertase gene family in rice (Oryza sativa L.).</title>
        <authorList>
            <person name="Cho J.-I."/>
            <person name="Lee S.-K."/>
            <person name="Ko S."/>
            <person name="Kim H.-K."/>
            <person name="Jun S.-H."/>
            <person name="Lee Y.-H."/>
            <person name="Bhoo S.H."/>
            <person name="Lee K.-W."/>
            <person name="An G."/>
            <person name="Hahn T.-R."/>
            <person name="Jeon J.-S."/>
        </authorList>
    </citation>
    <scope>NUCLEOTIDE SEQUENCE [MRNA]</scope>
    <scope>TISSUE SPECIFICITY</scope>
    <scope>DEVELOPMENTAL STAGE</scope>
    <scope>INDUCTION</scope>
    <source>
        <strain>cv. Nipponbare</strain>
    </source>
</reference>
<reference key="2">
    <citation type="journal article" date="2002" name="Nature">
        <title>Sequence and analysis of rice chromosome 4.</title>
        <authorList>
            <person name="Feng Q."/>
            <person name="Zhang Y."/>
            <person name="Hao P."/>
            <person name="Wang S."/>
            <person name="Fu G."/>
            <person name="Huang Y."/>
            <person name="Li Y."/>
            <person name="Zhu J."/>
            <person name="Liu Y."/>
            <person name="Hu X."/>
            <person name="Jia P."/>
            <person name="Zhang Y."/>
            <person name="Zhao Q."/>
            <person name="Ying K."/>
            <person name="Yu S."/>
            <person name="Tang Y."/>
            <person name="Weng Q."/>
            <person name="Zhang L."/>
            <person name="Lu Y."/>
            <person name="Mu J."/>
            <person name="Lu Y."/>
            <person name="Zhang L.S."/>
            <person name="Yu Z."/>
            <person name="Fan D."/>
            <person name="Liu X."/>
            <person name="Lu T."/>
            <person name="Li C."/>
            <person name="Wu Y."/>
            <person name="Sun T."/>
            <person name="Lei H."/>
            <person name="Li T."/>
            <person name="Hu H."/>
            <person name="Guan J."/>
            <person name="Wu M."/>
            <person name="Zhang R."/>
            <person name="Zhou B."/>
            <person name="Chen Z."/>
            <person name="Chen L."/>
            <person name="Jin Z."/>
            <person name="Wang R."/>
            <person name="Yin H."/>
            <person name="Cai Z."/>
            <person name="Ren S."/>
            <person name="Lv G."/>
            <person name="Gu W."/>
            <person name="Zhu G."/>
            <person name="Tu Y."/>
            <person name="Jia J."/>
            <person name="Zhang Y."/>
            <person name="Chen J."/>
            <person name="Kang H."/>
            <person name="Chen X."/>
            <person name="Shao C."/>
            <person name="Sun Y."/>
            <person name="Hu Q."/>
            <person name="Zhang X."/>
            <person name="Zhang W."/>
            <person name="Wang L."/>
            <person name="Ding C."/>
            <person name="Sheng H."/>
            <person name="Gu J."/>
            <person name="Chen S."/>
            <person name="Ni L."/>
            <person name="Zhu F."/>
            <person name="Chen W."/>
            <person name="Lan L."/>
            <person name="Lai Y."/>
            <person name="Cheng Z."/>
            <person name="Gu M."/>
            <person name="Jiang J."/>
            <person name="Li J."/>
            <person name="Hong G."/>
            <person name="Xue Y."/>
            <person name="Han B."/>
        </authorList>
    </citation>
    <scope>NUCLEOTIDE SEQUENCE [LARGE SCALE GENOMIC DNA]</scope>
    <source>
        <strain>cv. Nipponbare</strain>
    </source>
</reference>
<reference key="3">
    <citation type="journal article" date="2005" name="Nature">
        <title>The map-based sequence of the rice genome.</title>
        <authorList>
            <consortium name="International rice genome sequencing project (IRGSP)"/>
        </authorList>
    </citation>
    <scope>NUCLEOTIDE SEQUENCE [LARGE SCALE GENOMIC DNA]</scope>
    <source>
        <strain>cv. Nipponbare</strain>
    </source>
</reference>
<reference key="4">
    <citation type="journal article" date="2008" name="Nucleic Acids Res.">
        <title>The rice annotation project database (RAP-DB): 2008 update.</title>
        <authorList>
            <consortium name="The rice annotation project (RAP)"/>
        </authorList>
    </citation>
    <scope>GENOME REANNOTATION</scope>
    <source>
        <strain>cv. Nipponbare</strain>
    </source>
</reference>
<reference key="5">
    <citation type="journal article" date="2013" name="Rice">
        <title>Improvement of the Oryza sativa Nipponbare reference genome using next generation sequence and optical map data.</title>
        <authorList>
            <person name="Kawahara Y."/>
            <person name="de la Bastide M."/>
            <person name="Hamilton J.P."/>
            <person name="Kanamori H."/>
            <person name="McCombie W.R."/>
            <person name="Ouyang S."/>
            <person name="Schwartz D.C."/>
            <person name="Tanaka T."/>
            <person name="Wu J."/>
            <person name="Zhou S."/>
            <person name="Childs K.L."/>
            <person name="Davidson R.M."/>
            <person name="Lin H."/>
            <person name="Quesada-Ocampo L."/>
            <person name="Vaillancourt B."/>
            <person name="Sakai H."/>
            <person name="Lee S.S."/>
            <person name="Kim J."/>
            <person name="Numa H."/>
            <person name="Itoh T."/>
            <person name="Buell C.R."/>
            <person name="Matsumoto T."/>
        </authorList>
    </citation>
    <scope>GENOME REANNOTATION</scope>
    <source>
        <strain>cv. Nipponbare</strain>
    </source>
</reference>
<reference key="6">
    <citation type="journal article" date="2005" name="PLoS Biol.">
        <title>The genomes of Oryza sativa: a history of duplications.</title>
        <authorList>
            <person name="Yu J."/>
            <person name="Wang J."/>
            <person name="Lin W."/>
            <person name="Li S."/>
            <person name="Li H."/>
            <person name="Zhou J."/>
            <person name="Ni P."/>
            <person name="Dong W."/>
            <person name="Hu S."/>
            <person name="Zeng C."/>
            <person name="Zhang J."/>
            <person name="Zhang Y."/>
            <person name="Li R."/>
            <person name="Xu Z."/>
            <person name="Li S."/>
            <person name="Li X."/>
            <person name="Zheng H."/>
            <person name="Cong L."/>
            <person name="Lin L."/>
            <person name="Yin J."/>
            <person name="Geng J."/>
            <person name="Li G."/>
            <person name="Shi J."/>
            <person name="Liu J."/>
            <person name="Lv H."/>
            <person name="Li J."/>
            <person name="Wang J."/>
            <person name="Deng Y."/>
            <person name="Ran L."/>
            <person name="Shi X."/>
            <person name="Wang X."/>
            <person name="Wu Q."/>
            <person name="Li C."/>
            <person name="Ren X."/>
            <person name="Wang J."/>
            <person name="Wang X."/>
            <person name="Li D."/>
            <person name="Liu D."/>
            <person name="Zhang X."/>
            <person name="Ji Z."/>
            <person name="Zhao W."/>
            <person name="Sun Y."/>
            <person name="Zhang Z."/>
            <person name="Bao J."/>
            <person name="Han Y."/>
            <person name="Dong L."/>
            <person name="Ji J."/>
            <person name="Chen P."/>
            <person name="Wu S."/>
            <person name="Liu J."/>
            <person name="Xiao Y."/>
            <person name="Bu D."/>
            <person name="Tan J."/>
            <person name="Yang L."/>
            <person name="Ye C."/>
            <person name="Zhang J."/>
            <person name="Xu J."/>
            <person name="Zhou Y."/>
            <person name="Yu Y."/>
            <person name="Zhang B."/>
            <person name="Zhuang S."/>
            <person name="Wei H."/>
            <person name="Liu B."/>
            <person name="Lei M."/>
            <person name="Yu H."/>
            <person name="Li Y."/>
            <person name="Xu H."/>
            <person name="Wei S."/>
            <person name="He X."/>
            <person name="Fang L."/>
            <person name="Zhang Z."/>
            <person name="Zhang Y."/>
            <person name="Huang X."/>
            <person name="Su Z."/>
            <person name="Tong W."/>
            <person name="Li J."/>
            <person name="Tong Z."/>
            <person name="Li S."/>
            <person name="Ye J."/>
            <person name="Wang L."/>
            <person name="Fang L."/>
            <person name="Lei T."/>
            <person name="Chen C.-S."/>
            <person name="Chen H.-C."/>
            <person name="Xu Z."/>
            <person name="Li H."/>
            <person name="Huang H."/>
            <person name="Zhang F."/>
            <person name="Xu H."/>
            <person name="Li N."/>
            <person name="Zhao C."/>
            <person name="Li S."/>
            <person name="Dong L."/>
            <person name="Huang Y."/>
            <person name="Li L."/>
            <person name="Xi Y."/>
            <person name="Qi Q."/>
            <person name="Li W."/>
            <person name="Zhang B."/>
            <person name="Hu W."/>
            <person name="Zhang Y."/>
            <person name="Tian X."/>
            <person name="Jiao Y."/>
            <person name="Liang X."/>
            <person name="Jin J."/>
            <person name="Gao L."/>
            <person name="Zheng W."/>
            <person name="Hao B."/>
            <person name="Liu S.-M."/>
            <person name="Wang W."/>
            <person name="Yuan L."/>
            <person name="Cao M."/>
            <person name="McDermott J."/>
            <person name="Samudrala R."/>
            <person name="Wang J."/>
            <person name="Wong G.K.-S."/>
            <person name="Yang H."/>
        </authorList>
    </citation>
    <scope>NUCLEOTIDE SEQUENCE [LARGE SCALE GENOMIC DNA]</scope>
    <source>
        <strain>cv. Nipponbare</strain>
    </source>
</reference>
<reference key="7">
    <citation type="journal article" date="2008" name="Nat. Genet.">
        <title>Control of rice grain-filling and yield by a gene with a potential signature of domestication.</title>
        <authorList>
            <person name="Wang E."/>
            <person name="Wang J."/>
            <person name="Zhu X."/>
            <person name="Hao W."/>
            <person name="Wang L."/>
            <person name="Li Q."/>
            <person name="Zhang L."/>
            <person name="He W."/>
            <person name="Lu B."/>
            <person name="Lin H."/>
            <person name="Ma H."/>
            <person name="Zhang G."/>
            <person name="He Z."/>
        </authorList>
    </citation>
    <scope>FUNCTION</scope>
    <scope>SUBCELLULAR LOCATION</scope>
    <scope>TISSUE SPECIFICITY</scope>
    <scope>DEVELOPMENTAL STAGE</scope>
    <scope>BIOTECHNOLOGY</scope>
    <scope>DISRUPTION PHENOTYPE</scope>
    <source>
        <strain>cv. Zhonghua 11</strain>
    </source>
</reference>
<reference key="8">
    <citation type="journal article" date="2010" name="BMC Evol. Biol.">
        <title>Duplication and independent selection of cell-wall invertase genes GIF1 and OsCIN1 during rice evolution and domestication.</title>
        <authorList>
            <person name="Wang E."/>
            <person name="Xu X."/>
            <person name="Zhang L."/>
            <person name="Zhang H."/>
            <person name="Lin L."/>
            <person name="Wang Q."/>
            <person name="Li Q."/>
            <person name="Ge S."/>
            <person name="Lu B.R."/>
            <person name="Wang W."/>
            <person name="He Z."/>
        </authorList>
    </citation>
    <scope>CATALYTIC ACTIVITY</scope>
</reference>
<reference key="9">
    <citation type="journal article" date="2014" name="Mol. Plant Pathol.">
        <title>Sugar homeostasis mediated by cell wall invertase GRAIN INCOMPLETE FILLING 1 (GIF1) plays a role in pre-existing and induced defence in rice.</title>
        <authorList>
            <person name="Sun L."/>
            <person name="Yang D.L."/>
            <person name="Kong Y."/>
            <person name="Chen Y."/>
            <person name="Li X.Z."/>
            <person name="Zeng L.J."/>
            <person name="Li Q."/>
            <person name="Wang E.T."/>
            <person name="He Z.H."/>
        </authorList>
    </citation>
    <scope>FUNCTION</scope>
</reference>
<proteinExistence type="evidence at protein level"/>
<gene>
    <name type="primary">CIN2</name>
    <name evidence="7" type="synonym">GIF1</name>
    <name type="ordered locus">Os04g0413500</name>
    <name type="ordered locus">LOC_Os04g33740</name>
    <name type="ORF">OJ000126_13.8</name>
    <name type="ORF">OsJ_014165</name>
</gene>
<comment type="function">
    <text evidence="4 6">Cell wall-associated invertase that cleaves sucrose into glucose and fructose and is required for assimilated carbon partitioning during early grain-filling. May be involved in sucrose unloaded in the ovular and stylar vascular tissues for the stimulation of starch synthesis in the developing endosperm during grain-filling (PubMed:18820698). Sugar homeostasis mediated by CIN2/GIF1 plays an important role in constitutive and induced physical and chemical defense against pathogens (PubMed:24118770).</text>
</comment>
<comment type="catalytic activity">
    <reaction evidence="4 5">
        <text>Hydrolysis of terminal non-reducing beta-D-fructofuranoside residues in beta-D-fructofuranosides.</text>
        <dbReference type="EC" id="3.2.1.26"/>
    </reaction>
</comment>
<comment type="subcellular location">
    <subcellularLocation>
        <location evidence="9">Secreted</location>
        <location evidence="9">Cell wall</location>
    </subcellularLocation>
    <text evidence="9">Associated with the cell wall.</text>
</comment>
<comment type="tissue specificity">
    <text evidence="3 4">Expressed in leaves and flowers. Weakly expressed in seeds (PubMed:15759120). Expressed in growing roots, node and the rapidly elongating zone of the internode (PubMed:18820698).</text>
</comment>
<comment type="developmental stage">
    <text evidence="3 4">Expressed throughout flowering, with higher expression from 1 to 6 days after flowering (PubMed:15759120). During early grain-filling, expressed in the ovular vascular and lateral stylar vascular traces (PubMed:18820698).</text>
</comment>
<comment type="induction">
    <text evidence="3">By sucrose in caryopsis from 1 to 2 and from 9 to 10 days after flowering.</text>
</comment>
<comment type="disruption phenotype">
    <text evidence="4">Slow grain-filling resulting in reduced weight of grains containing loosely packed starch granules and reduced levels of amylose and amylopectin.</text>
</comment>
<comment type="biotechnology">
    <text evidence="8">CIN2/GIF1 is a potential domestication-selected gene that controls grain filling and yield, and could be used for further crop improvement.</text>
</comment>
<comment type="similarity">
    <text evidence="9">Belongs to the glycosyl hydrolase 32 family.</text>
</comment>
<comment type="sequence caution" evidence="9">
    <conflict type="erroneous gene model prediction">
        <sequence resource="EMBL-CDS" id="CAD40589"/>
    </conflict>
</comment>
<feature type="signal peptide" evidence="1">
    <location>
        <begin position="1"/>
        <end position="25"/>
    </location>
</feature>
<feature type="chain" id="PRO_0000033380" description="Beta-fructofuranosidase, insoluble isoenzyme 2">
    <location>
        <begin position="26"/>
        <end position="598"/>
    </location>
</feature>
<feature type="active site" evidence="2">
    <location>
        <position position="69"/>
    </location>
</feature>
<feature type="glycosylation site" description="N-linked (GlcNAc...) asparagine" evidence="1">
    <location>
        <position position="164"/>
    </location>
</feature>
<feature type="glycosylation site" description="N-linked (GlcNAc...) asparagine" evidence="1">
    <location>
        <position position="189"/>
    </location>
</feature>
<feature type="glycosylation site" description="N-linked (GlcNAc...) asparagine" evidence="1">
    <location>
        <position position="348"/>
    </location>
</feature>
<dbReference type="EC" id="3.2.1.26" evidence="4 5"/>
<dbReference type="EMBL" id="AY578159">
    <property type="protein sequence ID" value="AAT84402.1"/>
    <property type="molecule type" value="mRNA"/>
</dbReference>
<dbReference type="EMBL" id="AL662945">
    <property type="protein sequence ID" value="CAD40589.2"/>
    <property type="status" value="ALT_SEQ"/>
    <property type="molecule type" value="Genomic_DNA"/>
</dbReference>
<dbReference type="EMBL" id="AP008210">
    <property type="protein sequence ID" value="BAF14662.1"/>
    <property type="molecule type" value="Genomic_DNA"/>
</dbReference>
<dbReference type="EMBL" id="AP014960">
    <property type="protein sequence ID" value="BAS89136.1"/>
    <property type="molecule type" value="Genomic_DNA"/>
</dbReference>
<dbReference type="EMBL" id="CM000141">
    <property type="status" value="NOT_ANNOTATED_CDS"/>
    <property type="molecule type" value="Genomic_DNA"/>
</dbReference>
<dbReference type="RefSeq" id="XP_015633534.1">
    <property type="nucleotide sequence ID" value="XM_015778048.1"/>
</dbReference>
<dbReference type="SMR" id="Q0JDC5"/>
<dbReference type="FunCoup" id="Q0JDC5">
    <property type="interactions" value="172"/>
</dbReference>
<dbReference type="STRING" id="39947.Q0JDC5"/>
<dbReference type="CAZy" id="GH32">
    <property type="family name" value="Glycoside Hydrolase Family 32"/>
</dbReference>
<dbReference type="GlyCosmos" id="Q0JDC5">
    <property type="glycosylation" value="3 sites, No reported glycans"/>
</dbReference>
<dbReference type="PaxDb" id="39947-Q0JDC5"/>
<dbReference type="EnsemblPlants" id="Os04t0413500-01">
    <property type="protein sequence ID" value="Os04t0413500-01"/>
    <property type="gene ID" value="Os04g0413500"/>
</dbReference>
<dbReference type="Gramene" id="Os04t0413500-01">
    <property type="protein sequence ID" value="Os04t0413500-01"/>
    <property type="gene ID" value="Os04g0413500"/>
</dbReference>
<dbReference type="KEGG" id="dosa:Os04g0413500"/>
<dbReference type="eggNOG" id="KOG0228">
    <property type="taxonomic scope" value="Eukaryota"/>
</dbReference>
<dbReference type="HOGENOM" id="CLU_001528_6_0_1"/>
<dbReference type="InParanoid" id="Q0JDC5"/>
<dbReference type="OMA" id="IPREMYV"/>
<dbReference type="OrthoDB" id="202537at2759"/>
<dbReference type="PlantReactome" id="R-OSA-9035605">
    <property type="pathway name" value="Regulation of seed size"/>
</dbReference>
<dbReference type="Proteomes" id="UP000000763">
    <property type="component" value="Chromosome 4"/>
</dbReference>
<dbReference type="Proteomes" id="UP000007752">
    <property type="component" value="Chromosome 4"/>
</dbReference>
<dbReference type="Proteomes" id="UP000059680">
    <property type="component" value="Chromosome 4"/>
</dbReference>
<dbReference type="ExpressionAtlas" id="Q0JDC5">
    <property type="expression patterns" value="baseline and differential"/>
</dbReference>
<dbReference type="GO" id="GO:0005576">
    <property type="term" value="C:extracellular region"/>
    <property type="evidence" value="ECO:0007669"/>
    <property type="project" value="UniProtKB-KW"/>
</dbReference>
<dbReference type="GO" id="GO:0004564">
    <property type="term" value="F:beta-fructofuranosidase activity"/>
    <property type="evidence" value="ECO:0007669"/>
    <property type="project" value="UniProtKB-EC"/>
</dbReference>
<dbReference type="GO" id="GO:0005975">
    <property type="term" value="P:carbohydrate metabolic process"/>
    <property type="evidence" value="ECO:0007669"/>
    <property type="project" value="InterPro"/>
</dbReference>
<dbReference type="GO" id="GO:0052576">
    <property type="term" value="P:carbohydrate storage"/>
    <property type="evidence" value="ECO:0000315"/>
    <property type="project" value="UniProtKB"/>
</dbReference>
<dbReference type="GO" id="GO:0042742">
    <property type="term" value="P:defense response to bacterium"/>
    <property type="evidence" value="ECO:0000315"/>
    <property type="project" value="UniProtKB"/>
</dbReference>
<dbReference type="GO" id="GO:0050832">
    <property type="term" value="P:defense response to fungus"/>
    <property type="evidence" value="ECO:0000315"/>
    <property type="project" value="UniProtKB"/>
</dbReference>
<dbReference type="CDD" id="cd18624">
    <property type="entry name" value="GH32_Fruct1-like"/>
    <property type="match status" value="1"/>
</dbReference>
<dbReference type="FunFam" id="2.115.10.20:FF:000001">
    <property type="entry name" value="Beta-fructofuranosidase, insoluble isoenzyme CWINV1"/>
    <property type="match status" value="1"/>
</dbReference>
<dbReference type="FunFam" id="2.60.120.560:FF:000002">
    <property type="entry name" value="Beta-fructofuranosidase, insoluble isoenzyme CWINV1"/>
    <property type="match status" value="1"/>
</dbReference>
<dbReference type="Gene3D" id="2.60.120.560">
    <property type="entry name" value="Exo-inulinase, domain 1"/>
    <property type="match status" value="1"/>
</dbReference>
<dbReference type="Gene3D" id="2.115.10.20">
    <property type="entry name" value="Glycosyl hydrolase domain, family 43"/>
    <property type="match status" value="1"/>
</dbReference>
<dbReference type="InterPro" id="IPR013320">
    <property type="entry name" value="ConA-like_dom_sf"/>
</dbReference>
<dbReference type="InterPro" id="IPR050551">
    <property type="entry name" value="Fructan_Metab_Enzymes"/>
</dbReference>
<dbReference type="InterPro" id="IPR001362">
    <property type="entry name" value="Glyco_hydro_32"/>
</dbReference>
<dbReference type="InterPro" id="IPR018053">
    <property type="entry name" value="Glyco_hydro_32_AS"/>
</dbReference>
<dbReference type="InterPro" id="IPR013189">
    <property type="entry name" value="Glyco_hydro_32_C"/>
</dbReference>
<dbReference type="InterPro" id="IPR013148">
    <property type="entry name" value="Glyco_hydro_32_N"/>
</dbReference>
<dbReference type="InterPro" id="IPR023296">
    <property type="entry name" value="Glyco_hydro_beta-prop_sf"/>
</dbReference>
<dbReference type="PANTHER" id="PTHR31953">
    <property type="entry name" value="BETA-FRUCTOFURANOSIDASE, INSOLUBLE ISOENZYME CWINV1-RELATED"/>
    <property type="match status" value="1"/>
</dbReference>
<dbReference type="Pfam" id="PF08244">
    <property type="entry name" value="Glyco_hydro_32C"/>
    <property type="match status" value="1"/>
</dbReference>
<dbReference type="Pfam" id="PF00251">
    <property type="entry name" value="Glyco_hydro_32N"/>
    <property type="match status" value="1"/>
</dbReference>
<dbReference type="SMART" id="SM00640">
    <property type="entry name" value="Glyco_32"/>
    <property type="match status" value="1"/>
</dbReference>
<dbReference type="SUPFAM" id="SSF75005">
    <property type="entry name" value="Arabinanase/levansucrase/invertase"/>
    <property type="match status" value="1"/>
</dbReference>
<dbReference type="SUPFAM" id="SSF49899">
    <property type="entry name" value="Concanavalin A-like lectins/glucanases"/>
    <property type="match status" value="1"/>
</dbReference>
<dbReference type="PROSITE" id="PS00609">
    <property type="entry name" value="GLYCOSYL_HYDROL_F32"/>
    <property type="match status" value="1"/>
</dbReference>
<accession>Q0JDC5</accession>
<accession>A3ATP3</accession>
<accession>Q56UD4</accession>
<accession>Q6VGJ3</accession>
<accession>Q7XVJ4</accession>
<sequence length="598" mass="66263">MGVLGSRVAWAWLVQLLLLQQLAGASHVVYDDLELQAAATTADGVPPSIVDSELRTGYHFQPPKNWINDPNAPMYYKGWYHLFYQYNPKGAVWGNIVWAHSVSRDLINWVALKPAIEPSIRADKYGCWSGSATMMADGTPVIMYTGVNRPDVNYQVQNVALPRNGSDPLLREWVKPGHNPVIVPEGGINATQFRDPTTAWRGADGHWRLLVGSLAGQSRGVAYVYRSRDFRRWTRAAQPLHSAPTGMWECPDFYPVTADGRREGVDTSSAVVDAAASARVKYVLKNSLDLRRYDYYTVGTYDRKAERYVPDDPAGDEHHIRYDYGNFYASKTFYDPAKRRRILWGWANESDTAADDVAKGWAGIQAIPRKVWLDPSGKQLLQWPIEEVERLRGKWPVILKDRVVKPGEHVEVTGLQTAQADVEVSFEVGSLEAAERLDPAMAYDAQRLCSARGADARGGVGPFGLWVLASAGLEEKTAVFFRVFRPAARGGGAGKPVVLMCTDPTKSSRNPNMYQPTFAGFVDTDITNGKISLRSLIDRSVVESFGAGGKACILSRVYPSLAIGKNARLYVFNNGKAEIKVSQLTAWEMKKPVMMNGA</sequence>
<evidence type="ECO:0000255" key="1"/>
<evidence type="ECO:0000255" key="2">
    <source>
        <dbReference type="PROSITE-ProRule" id="PRU10067"/>
    </source>
</evidence>
<evidence type="ECO:0000269" key="3">
    <source>
    </source>
</evidence>
<evidence type="ECO:0000269" key="4">
    <source>
    </source>
</evidence>
<evidence type="ECO:0000269" key="5">
    <source>
    </source>
</evidence>
<evidence type="ECO:0000269" key="6">
    <source>
    </source>
</evidence>
<evidence type="ECO:0000303" key="7">
    <source>
    </source>
</evidence>
<evidence type="ECO:0000303" key="8">
    <source>
    </source>
</evidence>
<evidence type="ECO:0000305" key="9"/>
<name>INV2_ORYSJ</name>
<organism>
    <name type="scientific">Oryza sativa subsp. japonica</name>
    <name type="common">Rice</name>
    <dbReference type="NCBI Taxonomy" id="39947"/>
    <lineage>
        <taxon>Eukaryota</taxon>
        <taxon>Viridiplantae</taxon>
        <taxon>Streptophyta</taxon>
        <taxon>Embryophyta</taxon>
        <taxon>Tracheophyta</taxon>
        <taxon>Spermatophyta</taxon>
        <taxon>Magnoliopsida</taxon>
        <taxon>Liliopsida</taxon>
        <taxon>Poales</taxon>
        <taxon>Poaceae</taxon>
        <taxon>BOP clade</taxon>
        <taxon>Oryzoideae</taxon>
        <taxon>Oryzeae</taxon>
        <taxon>Oryzinae</taxon>
        <taxon>Oryza</taxon>
        <taxon>Oryza sativa</taxon>
    </lineage>
</organism>
<protein>
    <recommendedName>
        <fullName>Beta-fructofuranosidase, insoluble isoenzyme 2</fullName>
        <ecNumber evidence="4 5">3.2.1.26</ecNumber>
    </recommendedName>
    <alternativeName>
        <fullName>Cell wall beta-fructosidase 2</fullName>
    </alternativeName>
    <alternativeName>
        <fullName>Invertase 2</fullName>
    </alternativeName>
    <alternativeName>
        <fullName>OsCIN2</fullName>
    </alternativeName>
    <alternativeName>
        <fullName evidence="7">Protein GRAIN INCOMPLETE FILLING 1</fullName>
    </alternativeName>
    <alternativeName>
        <fullName>Sucrose hydrolase 2</fullName>
    </alternativeName>
</protein>
<keyword id="KW-0119">Carbohydrate metabolism</keyword>
<keyword id="KW-0134">Cell wall</keyword>
<keyword id="KW-0325">Glycoprotein</keyword>
<keyword id="KW-0326">Glycosidase</keyword>
<keyword id="KW-0378">Hydrolase</keyword>
<keyword id="KW-1185">Reference proteome</keyword>
<keyword id="KW-0964">Secreted</keyword>
<keyword id="KW-0732">Signal</keyword>